<comment type="function">
    <text evidence="2 3 4 7">Acts as a negative regulator of nuclear pre-mRNA 3'-end processing (mRNA polyadenylation) (Probable) (PubMed:26588990). Plays a role in tissue-specific expression of protein isoforms by regulating differential processing of pre-mRNA 3'-end (alternative polyadenylation) (PubMed:26588990, PubMed:28087624). In neurons, regulates alternative polyadenylation of specific mRNAs including unc-44 and dlk-1 by interacting with phosphatase ssup-72 and thus preventing ssup-72 dephosphorylation of RNA polymerase II subunit ama-1 (PubMed:26588990). Specifically, alters the usage of internal polyadenylation sites (PAS) to promote the production of neuron-specific unc-44 isoform and dlk-1 isoform c, both required for normal synapse and axon development (PubMed:26588990). Conversely, in the epidermis, by inhibiting ssup-72 function, promotes the usage of an internal PAS preventing the production of one of unc-44 isoforms (PubMed:28087624). In neurons, also negatively regulates protein levels of pre-RNA processing protein psf-2 (PubMed:20530551).</text>
</comment>
<comment type="subunit">
    <text evidence="3">May interact (via C-terminus) with ssup-72; the interaction may prevent ssup-72 binding to RNA polymerase II subunit ama-1.</text>
</comment>
<comment type="subcellular location">
    <subcellularLocation>
        <location evidence="4">Nucleus</location>
    </subcellularLocation>
    <subcellularLocation>
        <location evidence="2">Nucleus speckle</location>
    </subcellularLocation>
    <text evidence="2">Also localizes to a small subnuclear ring in neurons. In neurons, partially co-localizes with pfs-2 in the nucleus.</text>
</comment>
<comment type="tissue specificity">
    <text evidence="3">Expressed in germline, oocytes, epidermis, pharyngeal bulb and neurons.</text>
</comment>
<accession>Q95XQ1</accession>
<feature type="chain" id="PRO_0000447208" description="Synaptic defective enhancer 1">
    <location>
        <begin position="1"/>
        <end position="578"/>
    </location>
</feature>
<feature type="region of interest" description="Disordered" evidence="1">
    <location>
        <begin position="1"/>
        <end position="62"/>
    </location>
</feature>
<feature type="region of interest" description="Disordered" evidence="1">
    <location>
        <begin position="173"/>
        <end position="216"/>
    </location>
</feature>
<feature type="region of interest" description="Disordered" evidence="1">
    <location>
        <begin position="426"/>
        <end position="457"/>
    </location>
</feature>
<feature type="region of interest" description="Disordered" evidence="1">
    <location>
        <begin position="474"/>
        <end position="578"/>
    </location>
</feature>
<feature type="compositionally biased region" description="Low complexity" evidence="1">
    <location>
        <begin position="444"/>
        <end position="455"/>
    </location>
</feature>
<feature type="compositionally biased region" description="Pro residues" evidence="1">
    <location>
        <begin position="481"/>
        <end position="491"/>
    </location>
</feature>
<feature type="compositionally biased region" description="Pro residues" evidence="1">
    <location>
        <begin position="500"/>
        <end position="542"/>
    </location>
</feature>
<feature type="compositionally biased region" description="Low complexity" evidence="1">
    <location>
        <begin position="565"/>
        <end position="578"/>
    </location>
</feature>
<dbReference type="EMBL" id="BX284601">
    <property type="protein sequence ID" value="CCD69921.2"/>
    <property type="molecule type" value="Genomic_DNA"/>
</dbReference>
<dbReference type="RefSeq" id="NP_001367776.1">
    <property type="nucleotide sequence ID" value="NM_001381388.1"/>
</dbReference>
<dbReference type="RefSeq" id="NP_490969.4">
    <property type="nucleotide sequence ID" value="NM_058568.4"/>
</dbReference>
<dbReference type="SMR" id="Q95XQ1"/>
<dbReference type="DIP" id="DIP-24383N"/>
<dbReference type="FunCoup" id="Q95XQ1">
    <property type="interactions" value="78"/>
</dbReference>
<dbReference type="IntAct" id="Q95XQ1">
    <property type="interactions" value="5"/>
</dbReference>
<dbReference type="MINT" id="Q95XQ1"/>
<dbReference type="STRING" id="6239.Y39G10AR.17.1"/>
<dbReference type="PaxDb" id="6239-Y39G10AR.17"/>
<dbReference type="EnsemblMetazoa" id="Y39G10AR.17.1">
    <property type="protein sequence ID" value="Y39G10AR.17.1"/>
    <property type="gene ID" value="WBGene00021473"/>
</dbReference>
<dbReference type="GeneID" id="189773"/>
<dbReference type="UCSC" id="Y39G10AR.17">
    <property type="organism name" value="c. elegans"/>
</dbReference>
<dbReference type="AGR" id="WB:WBGene00021473"/>
<dbReference type="WormBase" id="Y39G10AR.17">
    <property type="protein sequence ID" value="CE47864"/>
    <property type="gene ID" value="WBGene00021473"/>
    <property type="gene designation" value="sydn-1"/>
</dbReference>
<dbReference type="eggNOG" id="ENOG502QURU">
    <property type="taxonomic scope" value="Eukaryota"/>
</dbReference>
<dbReference type="GeneTree" id="ENSGT00940000171596"/>
<dbReference type="HOGENOM" id="CLU_398630_0_0_1"/>
<dbReference type="InParanoid" id="Q95XQ1"/>
<dbReference type="OMA" id="FIHRQGM"/>
<dbReference type="OrthoDB" id="5876869at2759"/>
<dbReference type="PRO" id="PR:Q95XQ1"/>
<dbReference type="Proteomes" id="UP000001940">
    <property type="component" value="Chromosome I"/>
</dbReference>
<dbReference type="Bgee" id="WBGene00021473">
    <property type="expression patterns" value="Expressed in pharyngeal muscle cell (C elegans) and 3 other cell types or tissues"/>
</dbReference>
<dbReference type="GO" id="GO:0016607">
    <property type="term" value="C:nuclear speck"/>
    <property type="evidence" value="ECO:0000314"/>
    <property type="project" value="WormBase"/>
</dbReference>
<dbReference type="GO" id="GO:0006397">
    <property type="term" value="P:mRNA processing"/>
    <property type="evidence" value="ECO:0007669"/>
    <property type="project" value="UniProtKB-KW"/>
</dbReference>
<dbReference type="PRINTS" id="PR01217">
    <property type="entry name" value="PRICHEXTENSN"/>
</dbReference>
<name>SYDN_CAEEL</name>
<protein>
    <recommendedName>
        <fullName evidence="5">Synaptic defective enhancer 1</fullName>
    </recommendedName>
</protein>
<sequence length="578" mass="63234">MGEPSPSRRRSITSGIPCPSPTKQVLPPPPPEELHNILRKRPRSSAIPTTSQTHVRAPRKETDVVDRIWHDIDEEQREKLARRKEEAAKRKEQQPAQHIRDYLPLTATNLRNFRNEDSTISDFIHRQGMVDKLLGYKMLLGKMENCGTLGYEKMSEDEVQQLSREWLKNFFPSEQAHVGPRTPPSPAVDSDGGSYPKRPRRGPKTPPGSPGPSMDQAAVNRRELIEQLARNFGISSYKVEETLGTGLDKALEDCSKKLKNELMETFKDQLLSQIDRKTKIRDDLSDQMELVSDCSLSPDLIKKEEPDVVYHMAVPPPPIPPPIQPPPYSYYPVAPAAAPQVYHYAPPPPPPPPHPQQGLYQQNMMAYPPPMQHFNAPPPPMAPYQHQAPPSIVLPPVNVPPPPIGVRIDTPIPTAVLPIPTMVPPPPLPPPQAPFSGDCWRAQPAAPVPASVPVSSAPPPSVVVNVQSTLFSALGLHHKPPPPPPPPPPPTTSSTTTSHIPPPPPPPLPFSSAPPPPPPLPMVAAGPSPPSFVPPPPPPNPNQNPSIVLSPSAVTGGGGYRHRVNQFPPQQQQSFSNF</sequence>
<organism evidence="8">
    <name type="scientific">Caenorhabditis elegans</name>
    <dbReference type="NCBI Taxonomy" id="6239"/>
    <lineage>
        <taxon>Eukaryota</taxon>
        <taxon>Metazoa</taxon>
        <taxon>Ecdysozoa</taxon>
        <taxon>Nematoda</taxon>
        <taxon>Chromadorea</taxon>
        <taxon>Rhabditida</taxon>
        <taxon>Rhabditina</taxon>
        <taxon>Rhabditomorpha</taxon>
        <taxon>Rhabditoidea</taxon>
        <taxon>Rhabditidae</taxon>
        <taxon>Peloderinae</taxon>
        <taxon>Caenorhabditis</taxon>
    </lineage>
</organism>
<keyword id="KW-0507">mRNA processing</keyword>
<keyword id="KW-0539">Nucleus</keyword>
<keyword id="KW-1185">Reference proteome</keyword>
<reference evidence="8" key="1">
    <citation type="journal article" date="1998" name="Science">
        <title>Genome sequence of the nematode C. elegans: a platform for investigating biology.</title>
        <authorList>
            <consortium name="The C. elegans sequencing consortium"/>
        </authorList>
    </citation>
    <scope>NUCLEOTIDE SEQUENCE [LARGE SCALE GENOMIC DNA]</scope>
    <source>
        <strain evidence="8">Bristol N2</strain>
    </source>
</reference>
<reference evidence="6" key="2">
    <citation type="journal article" date="2010" name="Development">
        <title>Nuclear pre-mRNA 3'-end processing regulates synapse and axon development in C. elegans.</title>
        <authorList>
            <person name="Van Epps H."/>
            <person name="Dai Y."/>
            <person name="Qi Y."/>
            <person name="Goncharov A."/>
            <person name="Jin Y."/>
        </authorList>
    </citation>
    <scope>FUNCTION</scope>
    <scope>SUBCELLULAR LOCATION</scope>
</reference>
<reference evidence="6" key="3">
    <citation type="journal article" date="2015" name="Genes Dev.">
        <title>Context-dependent modulation of Pol II CTD phosphatase SSUP-72 regulates alternative polyadenylation in neuronal development.</title>
        <authorList>
            <person name="Chen F."/>
            <person name="Zhou Y."/>
            <person name="Qi Y.B."/>
            <person name="Khivansara V."/>
            <person name="Li H."/>
            <person name="Chun S.Y."/>
            <person name="Kim J.K."/>
            <person name="Fu X.D."/>
            <person name="Jin Y."/>
        </authorList>
    </citation>
    <scope>FUNCTION</scope>
    <scope>INTERACTION WITH SSUP-72</scope>
</reference>
<reference evidence="6" key="4">
    <citation type="journal article" date="2017" name="Development">
        <title>Tissue-specific regulation of alternative polyadenylation represses expression of a neuronal ankyrin isoform in C. elegans epidermal development.</title>
        <authorList>
            <person name="Chen F."/>
            <person name="Chisholm A.D."/>
            <person name="Jin Y."/>
        </authorList>
    </citation>
    <scope>FUNCTION</scope>
    <scope>SUBCELLULAR LOCATION</scope>
    <scope>TISSUE SPECIFICITY</scope>
</reference>
<gene>
    <name evidence="5 9" type="primary">sydn-1</name>
    <name evidence="9" type="ORF">Y39G10AR.17</name>
</gene>
<evidence type="ECO:0000256" key="1">
    <source>
        <dbReference type="SAM" id="MobiDB-lite"/>
    </source>
</evidence>
<evidence type="ECO:0000269" key="2">
    <source>
    </source>
</evidence>
<evidence type="ECO:0000269" key="3">
    <source>
    </source>
</evidence>
<evidence type="ECO:0000269" key="4">
    <source>
    </source>
</evidence>
<evidence type="ECO:0000303" key="5">
    <source>
    </source>
</evidence>
<evidence type="ECO:0000305" key="6"/>
<evidence type="ECO:0000305" key="7">
    <source>
    </source>
</evidence>
<evidence type="ECO:0000312" key="8">
    <source>
        <dbReference type="Proteomes" id="UP000001940"/>
    </source>
</evidence>
<evidence type="ECO:0000312" key="9">
    <source>
        <dbReference type="WormBase" id="Y39G10AR.17"/>
    </source>
</evidence>
<proteinExistence type="evidence at protein level"/>